<evidence type="ECO:0000255" key="1">
    <source>
        <dbReference type="HAMAP-Rule" id="MF_01589"/>
    </source>
</evidence>
<name>CMOA_ECOL5</name>
<dbReference type="EC" id="2.1.3.-" evidence="1"/>
<dbReference type="EMBL" id="CP000247">
    <property type="protein sequence ID" value="ABG69817.1"/>
    <property type="molecule type" value="Genomic_DNA"/>
</dbReference>
<dbReference type="RefSeq" id="WP_000019588.1">
    <property type="nucleotide sequence ID" value="NC_008253.1"/>
</dbReference>
<dbReference type="SMR" id="Q0TGW2"/>
<dbReference type="GeneID" id="75202724"/>
<dbReference type="KEGG" id="ecp:ECP_1814"/>
<dbReference type="HOGENOM" id="CLU_078475_0_0_6"/>
<dbReference type="Proteomes" id="UP000009182">
    <property type="component" value="Chromosome"/>
</dbReference>
<dbReference type="GO" id="GO:0016743">
    <property type="term" value="F:carboxyl- or carbamoyltransferase activity"/>
    <property type="evidence" value="ECO:0007669"/>
    <property type="project" value="UniProtKB-UniRule"/>
</dbReference>
<dbReference type="GO" id="GO:1904047">
    <property type="term" value="F:S-adenosyl-L-methionine binding"/>
    <property type="evidence" value="ECO:0007669"/>
    <property type="project" value="UniProtKB-UniRule"/>
</dbReference>
<dbReference type="GO" id="GO:0002098">
    <property type="term" value="P:tRNA wobble uridine modification"/>
    <property type="evidence" value="ECO:0007669"/>
    <property type="project" value="InterPro"/>
</dbReference>
<dbReference type="CDD" id="cd02440">
    <property type="entry name" value="AdoMet_MTases"/>
    <property type="match status" value="1"/>
</dbReference>
<dbReference type="FunFam" id="3.40.50.150:FF:000030">
    <property type="entry name" value="Carboxy-S-adenosyl-L-methionine synthase"/>
    <property type="match status" value="1"/>
</dbReference>
<dbReference type="Gene3D" id="3.40.50.150">
    <property type="entry name" value="Vaccinia Virus protein VP39"/>
    <property type="match status" value="1"/>
</dbReference>
<dbReference type="HAMAP" id="MF_01589">
    <property type="entry name" value="Cx_SAM_synthase"/>
    <property type="match status" value="1"/>
</dbReference>
<dbReference type="InterPro" id="IPR005271">
    <property type="entry name" value="CmoA"/>
</dbReference>
<dbReference type="InterPro" id="IPR041698">
    <property type="entry name" value="Methyltransf_25"/>
</dbReference>
<dbReference type="InterPro" id="IPR029063">
    <property type="entry name" value="SAM-dependent_MTases_sf"/>
</dbReference>
<dbReference type="NCBIfam" id="TIGR00740">
    <property type="entry name" value="carboxy-S-adenosyl-L-methionine synthase CmoA"/>
    <property type="match status" value="1"/>
</dbReference>
<dbReference type="NCBIfam" id="NF011995">
    <property type="entry name" value="PRK15451.1"/>
    <property type="match status" value="1"/>
</dbReference>
<dbReference type="PANTHER" id="PTHR43861:SF2">
    <property type="entry name" value="CARBOXY-S-ADENOSYL-L-METHIONINE SYNTHASE"/>
    <property type="match status" value="1"/>
</dbReference>
<dbReference type="PANTHER" id="PTHR43861">
    <property type="entry name" value="TRANS-ACONITATE 2-METHYLTRANSFERASE-RELATED"/>
    <property type="match status" value="1"/>
</dbReference>
<dbReference type="Pfam" id="PF13649">
    <property type="entry name" value="Methyltransf_25"/>
    <property type="match status" value="1"/>
</dbReference>
<dbReference type="PIRSF" id="PIRSF006325">
    <property type="entry name" value="MeTrfase_bac"/>
    <property type="match status" value="1"/>
</dbReference>
<dbReference type="SUPFAM" id="SSF53335">
    <property type="entry name" value="S-adenosyl-L-methionine-dependent methyltransferases"/>
    <property type="match status" value="1"/>
</dbReference>
<comment type="function">
    <text evidence="1">Catalyzes the conversion of S-adenosyl-L-methionine (SAM) to carboxy-S-adenosyl-L-methionine (Cx-SAM).</text>
</comment>
<comment type="catalytic activity">
    <reaction evidence="1">
        <text>prephenate + S-adenosyl-L-methionine = carboxy-S-adenosyl-L-methionine + 3-phenylpyruvate + H2O</text>
        <dbReference type="Rhea" id="RHEA:51692"/>
        <dbReference type="ChEBI" id="CHEBI:15377"/>
        <dbReference type="ChEBI" id="CHEBI:18005"/>
        <dbReference type="ChEBI" id="CHEBI:29934"/>
        <dbReference type="ChEBI" id="CHEBI:59789"/>
        <dbReference type="ChEBI" id="CHEBI:134278"/>
    </reaction>
</comment>
<comment type="subunit">
    <text evidence="1">Homodimer.</text>
</comment>
<comment type="similarity">
    <text evidence="1">Belongs to the class I-like SAM-binding methyltransferase superfamily. Cx-SAM synthase family.</text>
</comment>
<sequence>MSHRDTLFSAPIARLGDWTFDERVAEVFPDMIQRSVPGYSNIISMIGMLAERFVQPGTQVYDLGCSLGAATLSVRRNIHHDNCKIIAIDNSPAMIERCRRHIDAYKAPTPVDVIEGDIRDIAIENASMVVLNFTLQFLEPSERQALLDKIYQGLNPGGALVLSEKFSFEDAKVGELLFNMHHDFKRANGYSELEISQKRSMLENVMLTDSVETHKARLHKAGFEHSELWFQCFNFGSLVALKAEDAA</sequence>
<organism>
    <name type="scientific">Escherichia coli O6:K15:H31 (strain 536 / UPEC)</name>
    <dbReference type="NCBI Taxonomy" id="362663"/>
    <lineage>
        <taxon>Bacteria</taxon>
        <taxon>Pseudomonadati</taxon>
        <taxon>Pseudomonadota</taxon>
        <taxon>Gammaproteobacteria</taxon>
        <taxon>Enterobacterales</taxon>
        <taxon>Enterobacteriaceae</taxon>
        <taxon>Escherichia</taxon>
    </lineage>
</organism>
<keyword id="KW-0949">S-adenosyl-L-methionine</keyword>
<keyword id="KW-0808">Transferase</keyword>
<accession>Q0TGW2</accession>
<gene>
    <name evidence="1" type="primary">cmoA</name>
    <name type="ordered locus">ECP_1814</name>
</gene>
<reference key="1">
    <citation type="journal article" date="2006" name="Mol. Microbiol.">
        <title>Role of pathogenicity island-associated integrases in the genome plasticity of uropathogenic Escherichia coli strain 536.</title>
        <authorList>
            <person name="Hochhut B."/>
            <person name="Wilde C."/>
            <person name="Balling G."/>
            <person name="Middendorf B."/>
            <person name="Dobrindt U."/>
            <person name="Brzuszkiewicz E."/>
            <person name="Gottschalk G."/>
            <person name="Carniel E."/>
            <person name="Hacker J."/>
        </authorList>
    </citation>
    <scope>NUCLEOTIDE SEQUENCE [LARGE SCALE GENOMIC DNA]</scope>
    <source>
        <strain>536 / UPEC</strain>
    </source>
</reference>
<protein>
    <recommendedName>
        <fullName evidence="1">Carboxy-S-adenosyl-L-methionine synthase</fullName>
        <shortName evidence="1">Cx-SAM synthase</shortName>
        <ecNumber evidence="1">2.1.3.-</ecNumber>
    </recommendedName>
</protein>
<proteinExistence type="inferred from homology"/>
<feature type="chain" id="PRO_0000314330" description="Carboxy-S-adenosyl-L-methionine synthase">
    <location>
        <begin position="1"/>
        <end position="247"/>
    </location>
</feature>
<feature type="binding site" evidence="1">
    <location>
        <position position="39"/>
    </location>
    <ligand>
        <name>S-adenosyl-L-methionine</name>
        <dbReference type="ChEBI" id="CHEBI:59789"/>
    </ligand>
</feature>
<feature type="binding site" evidence="1">
    <location>
        <begin position="64"/>
        <end position="66"/>
    </location>
    <ligand>
        <name>S-adenosyl-L-methionine</name>
        <dbReference type="ChEBI" id="CHEBI:59789"/>
    </ligand>
</feature>
<feature type="binding site" evidence="1">
    <location>
        <begin position="89"/>
        <end position="90"/>
    </location>
    <ligand>
        <name>S-adenosyl-L-methionine</name>
        <dbReference type="ChEBI" id="CHEBI:59789"/>
    </ligand>
</feature>
<feature type="binding site" evidence="1">
    <location>
        <begin position="117"/>
        <end position="118"/>
    </location>
    <ligand>
        <name>S-adenosyl-L-methionine</name>
        <dbReference type="ChEBI" id="CHEBI:59789"/>
    </ligand>
</feature>
<feature type="binding site" evidence="1">
    <location>
        <position position="132"/>
    </location>
    <ligand>
        <name>S-adenosyl-L-methionine</name>
        <dbReference type="ChEBI" id="CHEBI:59789"/>
    </ligand>
</feature>
<feature type="binding site" evidence="1">
    <location>
        <position position="199"/>
    </location>
    <ligand>
        <name>S-adenosyl-L-methionine</name>
        <dbReference type="ChEBI" id="CHEBI:59789"/>
    </ligand>
</feature>